<name>JZ38A_CHIGU</name>
<evidence type="ECO:0000250" key="1">
    <source>
        <dbReference type="UniProtKB" id="P0C247"/>
    </source>
</evidence>
<evidence type="ECO:0000255" key="2"/>
<evidence type="ECO:0000269" key="3">
    <source>
    </source>
</evidence>
<evidence type="ECO:0000305" key="4"/>
<dbReference type="EMBL" id="EU233893">
    <property type="protein sequence ID" value="ABY71712.1"/>
    <property type="molecule type" value="mRNA"/>
</dbReference>
<dbReference type="SMR" id="B1P1G2"/>
<dbReference type="ArachnoServer" id="AS000839">
    <property type="toxin name" value="U21-theraphotoxin-Cg1a"/>
</dbReference>
<dbReference type="GO" id="GO:0005576">
    <property type="term" value="C:extracellular region"/>
    <property type="evidence" value="ECO:0007669"/>
    <property type="project" value="UniProtKB-SubCell"/>
</dbReference>
<dbReference type="GO" id="GO:0008200">
    <property type="term" value="F:ion channel inhibitor activity"/>
    <property type="evidence" value="ECO:0007669"/>
    <property type="project" value="InterPro"/>
</dbReference>
<dbReference type="GO" id="GO:0090729">
    <property type="term" value="F:toxin activity"/>
    <property type="evidence" value="ECO:0007669"/>
    <property type="project" value="UniProtKB-KW"/>
</dbReference>
<dbReference type="InterPro" id="IPR011696">
    <property type="entry name" value="Huwentoxin-1"/>
</dbReference>
<dbReference type="Pfam" id="PF07740">
    <property type="entry name" value="Toxin_12"/>
    <property type="match status" value="1"/>
</dbReference>
<dbReference type="SUPFAM" id="SSF57059">
    <property type="entry name" value="omega toxin-like"/>
    <property type="match status" value="1"/>
</dbReference>
<comment type="function">
    <text>Probable ion channel inhibitor.</text>
</comment>
<comment type="subcellular location">
    <subcellularLocation>
        <location>Secreted</location>
    </subcellularLocation>
</comment>
<comment type="tissue specificity">
    <text>Expressed by the venom gland.</text>
</comment>
<comment type="domain">
    <text evidence="1">The presence of a 'disulfide through disulfide knot' structurally defines this protein as a knottin.</text>
</comment>
<comment type="mass spectrometry">
    <text>Monoisotopic mass.</text>
</comment>
<comment type="similarity">
    <text evidence="4">Belongs to the neurotoxin 10 (Hwtx-1) family. 05 (F4a) subfamily.</text>
</comment>
<accession>B1P1G2</accession>
<sequence>MKVSVLITLAVLGVMFLLTSAEERGSDQMDSPAWLKSMEIIFQSEERECRWLFGGCEKDSDCCEHLGCRRAKPSWCGWDFTVGK</sequence>
<keyword id="KW-0027">Amidation</keyword>
<keyword id="KW-0903">Direct protein sequencing</keyword>
<keyword id="KW-1015">Disulfide bond</keyword>
<keyword id="KW-0872">Ion channel impairing toxin</keyword>
<keyword id="KW-0960">Knottin</keyword>
<keyword id="KW-0964">Secreted</keyword>
<keyword id="KW-0732">Signal</keyword>
<keyword id="KW-0800">Toxin</keyword>
<organism>
    <name type="scientific">Chilobrachys guangxiensis</name>
    <name type="common">Chinese earth tiger tarantula</name>
    <name type="synonym">Chilobrachys jingzhao</name>
    <dbReference type="NCBI Taxonomy" id="278060"/>
    <lineage>
        <taxon>Eukaryota</taxon>
        <taxon>Metazoa</taxon>
        <taxon>Ecdysozoa</taxon>
        <taxon>Arthropoda</taxon>
        <taxon>Chelicerata</taxon>
        <taxon>Arachnida</taxon>
        <taxon>Araneae</taxon>
        <taxon>Mygalomorphae</taxon>
        <taxon>Theraphosidae</taxon>
        <taxon>Chilobrachys</taxon>
    </lineage>
</organism>
<proteinExistence type="evidence at protein level"/>
<reference key="1">
    <citation type="journal article" date="2008" name="Cell. Mol. Life Sci.">
        <title>Molecular diversity and evolution of cystine knot toxins of the tarantula Chilobrachys jingzhao.</title>
        <authorList>
            <person name="Chen J."/>
            <person name="Deng M."/>
            <person name="He Q."/>
            <person name="Meng E."/>
            <person name="Jiang L."/>
            <person name="Liao Z."/>
            <person name="Rong M."/>
            <person name="Liang S."/>
        </authorList>
    </citation>
    <scope>NUCLEOTIDE SEQUENCE [LARGE SCALE MRNA]</scope>
    <source>
        <tissue>Venom gland</tissue>
    </source>
</reference>
<reference key="2">
    <citation type="journal article" date="2007" name="Proteomics">
        <title>Proteomic and peptidomic analysis of the venom from Chinese tarantula Chilobrachys jingzhao.</title>
        <authorList>
            <person name="Liao Z."/>
            <person name="Cao J."/>
            <person name="Li S."/>
            <person name="Yan X."/>
            <person name="Hu W."/>
            <person name="He Q."/>
            <person name="Chen J."/>
            <person name="Tang J."/>
            <person name="Xie J."/>
            <person name="Liang S."/>
        </authorList>
    </citation>
    <scope>PROTEIN SEQUENCE OF 48-82</scope>
    <scope>MASS SPECTROMETRY</scope>
    <scope>AMIDATION AT VAL-82</scope>
    <source>
        <tissue>Venom</tissue>
    </source>
</reference>
<protein>
    <recommendedName>
        <fullName>U21-theraphotoxin-Cg1a 1</fullName>
        <shortName>U21-TRTX-Cg1a</shortName>
    </recommendedName>
    <alternativeName>
        <fullName>Jingzhaotoxin-38</fullName>
        <shortName>JZTX-38</shortName>
    </alternativeName>
    <alternativeName>
        <fullName>Peptide F4-25.19</fullName>
    </alternativeName>
</protein>
<feature type="signal peptide" evidence="2">
    <location>
        <begin position="1"/>
        <end position="21"/>
    </location>
</feature>
<feature type="propeptide" id="PRO_0000398479" evidence="3">
    <location>
        <begin position="22"/>
        <end position="47"/>
    </location>
</feature>
<feature type="peptide" id="PRO_0000398480" description="U21-theraphotoxin-Cg1a 1">
    <location>
        <begin position="48"/>
        <end position="82"/>
    </location>
</feature>
<feature type="modified residue" description="Valine amide" evidence="3">
    <location>
        <position position="82"/>
    </location>
</feature>
<feature type="disulfide bond" evidence="1">
    <location>
        <begin position="49"/>
        <end position="63"/>
    </location>
</feature>
<feature type="disulfide bond" evidence="1">
    <location>
        <begin position="56"/>
        <end position="68"/>
    </location>
</feature>
<feature type="disulfide bond" evidence="1">
    <location>
        <begin position="62"/>
        <end position="76"/>
    </location>
</feature>